<evidence type="ECO:0000255" key="1">
    <source>
        <dbReference type="HAMAP-Rule" id="MF_00072"/>
    </source>
</evidence>
<feature type="chain" id="PRO_0000242227" description="Peptide chain release factor 3">
    <location>
        <begin position="1"/>
        <end position="534"/>
    </location>
</feature>
<feature type="domain" description="tr-type G">
    <location>
        <begin position="9"/>
        <end position="278"/>
    </location>
</feature>
<feature type="binding site" evidence="1">
    <location>
        <begin position="18"/>
        <end position="25"/>
    </location>
    <ligand>
        <name>GTP</name>
        <dbReference type="ChEBI" id="CHEBI:37565"/>
    </ligand>
</feature>
<feature type="binding site" evidence="1">
    <location>
        <begin position="86"/>
        <end position="90"/>
    </location>
    <ligand>
        <name>GTP</name>
        <dbReference type="ChEBI" id="CHEBI:37565"/>
    </ligand>
</feature>
<feature type="binding site" evidence="1">
    <location>
        <begin position="140"/>
        <end position="143"/>
    </location>
    <ligand>
        <name>GTP</name>
        <dbReference type="ChEBI" id="CHEBI:37565"/>
    </ligand>
</feature>
<gene>
    <name evidence="1" type="primary">prfC</name>
    <name type="ordered locus">XCV3179</name>
</gene>
<sequence>MSEVSNEAARRRTFAIISHPDAGKTTLTEKLLLFGGAIQMAGSVKGRKAARHATSDWMALEKERGISVTSSVMQFPYEGKIVNLLDTPGHADFGEDTYRVLTAVDSALMVIDVAKGVEERTIKLMEVCRLRDTPIMTFINKLDREGKNPIDLLDEVETVLGIQCAPVTWPIGMGQRLKGVVHLISGEVHLYEQGRNFTRQDSTIFPSLEAPGLVEKIGEQMLAELREELELVQGASNPFDLDAYRAGQQTPVFFGSGVNNFGVQPLLDFFVEHAPPPQARETTGRRVEPTEAKLSGFVFKIQANMDPQHRDRVAFMRVCSGKFTAGMKTLHVRSGKDVKLANALTFMASDREIAAEAWPGDVIGIHNHGTISIGDTFTEGESLSFTGIPNFAPELFRRARLRDPLKLKQLQKGLAQLSEEGATQFFRPLMSNDLILGAVGVLQFDVVAYRLKDEYGVDAIFEPVSVTTARWVHCDNAKKLEEFREKNAGNLGIDAAGQLVYLAPTRVNLQLAQERAPDVRFSATREHAHVKAID</sequence>
<name>RF3_XANE5</name>
<comment type="function">
    <text evidence="1">Increases the formation of ribosomal termination complexes and stimulates activities of RF-1 and RF-2. It binds guanine nucleotides and has strong preference for UGA stop codons. It may interact directly with the ribosome. The stimulation of RF-1 and RF-2 is significantly reduced by GTP and GDP, but not by GMP.</text>
</comment>
<comment type="subcellular location">
    <subcellularLocation>
        <location evidence="1">Cytoplasm</location>
    </subcellularLocation>
</comment>
<comment type="similarity">
    <text evidence="1">Belongs to the TRAFAC class translation factor GTPase superfamily. Classic translation factor GTPase family. PrfC subfamily.</text>
</comment>
<protein>
    <recommendedName>
        <fullName evidence="1">Peptide chain release factor 3</fullName>
        <shortName evidence="1">RF-3</shortName>
    </recommendedName>
</protein>
<dbReference type="EMBL" id="AM039952">
    <property type="protein sequence ID" value="CAJ24910.1"/>
    <property type="molecule type" value="Genomic_DNA"/>
</dbReference>
<dbReference type="RefSeq" id="WP_011348200.1">
    <property type="nucleotide sequence ID" value="NZ_CP017190.1"/>
</dbReference>
<dbReference type="SMR" id="Q3BQQ3"/>
<dbReference type="STRING" id="456327.BJD11_06910"/>
<dbReference type="KEGG" id="xcv:XCV3179"/>
<dbReference type="eggNOG" id="COG4108">
    <property type="taxonomic scope" value="Bacteria"/>
</dbReference>
<dbReference type="HOGENOM" id="CLU_002794_2_1_6"/>
<dbReference type="Proteomes" id="UP000007069">
    <property type="component" value="Chromosome"/>
</dbReference>
<dbReference type="GO" id="GO:0005829">
    <property type="term" value="C:cytosol"/>
    <property type="evidence" value="ECO:0007669"/>
    <property type="project" value="TreeGrafter"/>
</dbReference>
<dbReference type="GO" id="GO:0005525">
    <property type="term" value="F:GTP binding"/>
    <property type="evidence" value="ECO:0007669"/>
    <property type="project" value="UniProtKB-UniRule"/>
</dbReference>
<dbReference type="GO" id="GO:0003924">
    <property type="term" value="F:GTPase activity"/>
    <property type="evidence" value="ECO:0007669"/>
    <property type="project" value="InterPro"/>
</dbReference>
<dbReference type="GO" id="GO:0097216">
    <property type="term" value="F:guanosine tetraphosphate binding"/>
    <property type="evidence" value="ECO:0007669"/>
    <property type="project" value="UniProtKB-ARBA"/>
</dbReference>
<dbReference type="GO" id="GO:0016150">
    <property type="term" value="F:translation release factor activity, codon nonspecific"/>
    <property type="evidence" value="ECO:0007669"/>
    <property type="project" value="TreeGrafter"/>
</dbReference>
<dbReference type="GO" id="GO:0016149">
    <property type="term" value="F:translation release factor activity, codon specific"/>
    <property type="evidence" value="ECO:0007669"/>
    <property type="project" value="UniProtKB-UniRule"/>
</dbReference>
<dbReference type="GO" id="GO:0006449">
    <property type="term" value="P:regulation of translational termination"/>
    <property type="evidence" value="ECO:0007669"/>
    <property type="project" value="UniProtKB-UniRule"/>
</dbReference>
<dbReference type="CDD" id="cd04169">
    <property type="entry name" value="RF3"/>
    <property type="match status" value="1"/>
</dbReference>
<dbReference type="CDD" id="cd03689">
    <property type="entry name" value="RF3_II"/>
    <property type="match status" value="1"/>
</dbReference>
<dbReference type="CDD" id="cd16259">
    <property type="entry name" value="RF3_III"/>
    <property type="match status" value="1"/>
</dbReference>
<dbReference type="FunFam" id="2.40.30.10:FF:000040">
    <property type="entry name" value="Peptide chain release factor 3"/>
    <property type="match status" value="1"/>
</dbReference>
<dbReference type="FunFam" id="3.30.70.3280:FF:000001">
    <property type="entry name" value="Peptide chain release factor 3"/>
    <property type="match status" value="1"/>
</dbReference>
<dbReference type="FunFam" id="3.40.50.300:FF:000542">
    <property type="entry name" value="Peptide chain release factor 3"/>
    <property type="match status" value="1"/>
</dbReference>
<dbReference type="Gene3D" id="3.40.50.300">
    <property type="entry name" value="P-loop containing nucleotide triphosphate hydrolases"/>
    <property type="match status" value="2"/>
</dbReference>
<dbReference type="Gene3D" id="3.30.70.3280">
    <property type="entry name" value="Peptide chain release factor 3, domain III"/>
    <property type="match status" value="1"/>
</dbReference>
<dbReference type="HAMAP" id="MF_00072">
    <property type="entry name" value="Rel_fac_3"/>
    <property type="match status" value="1"/>
</dbReference>
<dbReference type="InterPro" id="IPR053905">
    <property type="entry name" value="EF-G-like_DII"/>
</dbReference>
<dbReference type="InterPro" id="IPR035647">
    <property type="entry name" value="EFG_III/V"/>
</dbReference>
<dbReference type="InterPro" id="IPR031157">
    <property type="entry name" value="G_TR_CS"/>
</dbReference>
<dbReference type="InterPro" id="IPR027417">
    <property type="entry name" value="P-loop_NTPase"/>
</dbReference>
<dbReference type="InterPro" id="IPR004548">
    <property type="entry name" value="PrfC"/>
</dbReference>
<dbReference type="InterPro" id="IPR032090">
    <property type="entry name" value="RF3_C"/>
</dbReference>
<dbReference type="InterPro" id="IPR038467">
    <property type="entry name" value="RF3_dom_3_sf"/>
</dbReference>
<dbReference type="InterPro" id="IPR041732">
    <property type="entry name" value="RF3_GTP-bd"/>
</dbReference>
<dbReference type="InterPro" id="IPR005225">
    <property type="entry name" value="Small_GTP-bd"/>
</dbReference>
<dbReference type="InterPro" id="IPR000795">
    <property type="entry name" value="T_Tr_GTP-bd_dom"/>
</dbReference>
<dbReference type="InterPro" id="IPR009000">
    <property type="entry name" value="Transl_B-barrel_sf"/>
</dbReference>
<dbReference type="NCBIfam" id="TIGR00503">
    <property type="entry name" value="prfC"/>
    <property type="match status" value="1"/>
</dbReference>
<dbReference type="NCBIfam" id="NF001964">
    <property type="entry name" value="PRK00741.1"/>
    <property type="match status" value="1"/>
</dbReference>
<dbReference type="NCBIfam" id="TIGR00231">
    <property type="entry name" value="small_GTP"/>
    <property type="match status" value="1"/>
</dbReference>
<dbReference type="PANTHER" id="PTHR43556">
    <property type="entry name" value="PEPTIDE CHAIN RELEASE FACTOR RF3"/>
    <property type="match status" value="1"/>
</dbReference>
<dbReference type="PANTHER" id="PTHR43556:SF2">
    <property type="entry name" value="PEPTIDE CHAIN RELEASE FACTOR RF3"/>
    <property type="match status" value="1"/>
</dbReference>
<dbReference type="Pfam" id="PF22042">
    <property type="entry name" value="EF-G_D2"/>
    <property type="match status" value="1"/>
</dbReference>
<dbReference type="Pfam" id="PF00009">
    <property type="entry name" value="GTP_EFTU"/>
    <property type="match status" value="1"/>
</dbReference>
<dbReference type="Pfam" id="PF16658">
    <property type="entry name" value="RF3_C"/>
    <property type="match status" value="1"/>
</dbReference>
<dbReference type="PRINTS" id="PR00315">
    <property type="entry name" value="ELONGATNFCT"/>
</dbReference>
<dbReference type="SUPFAM" id="SSF54980">
    <property type="entry name" value="EF-G C-terminal domain-like"/>
    <property type="match status" value="1"/>
</dbReference>
<dbReference type="SUPFAM" id="SSF52540">
    <property type="entry name" value="P-loop containing nucleoside triphosphate hydrolases"/>
    <property type="match status" value="1"/>
</dbReference>
<dbReference type="SUPFAM" id="SSF50447">
    <property type="entry name" value="Translation proteins"/>
    <property type="match status" value="1"/>
</dbReference>
<dbReference type="PROSITE" id="PS00301">
    <property type="entry name" value="G_TR_1"/>
    <property type="match status" value="1"/>
</dbReference>
<dbReference type="PROSITE" id="PS51722">
    <property type="entry name" value="G_TR_2"/>
    <property type="match status" value="1"/>
</dbReference>
<accession>Q3BQQ3</accession>
<reference key="1">
    <citation type="journal article" date="2005" name="J. Bacteriol.">
        <title>Insights into genome plasticity and pathogenicity of the plant pathogenic Bacterium Xanthomonas campestris pv. vesicatoria revealed by the complete genome sequence.</title>
        <authorList>
            <person name="Thieme F."/>
            <person name="Koebnik R."/>
            <person name="Bekel T."/>
            <person name="Berger C."/>
            <person name="Boch J."/>
            <person name="Buettner D."/>
            <person name="Caldana C."/>
            <person name="Gaigalat L."/>
            <person name="Goesmann A."/>
            <person name="Kay S."/>
            <person name="Kirchner O."/>
            <person name="Lanz C."/>
            <person name="Linke B."/>
            <person name="McHardy A.C."/>
            <person name="Meyer F."/>
            <person name="Mittenhuber G."/>
            <person name="Nies D.H."/>
            <person name="Niesbach-Kloesgen U."/>
            <person name="Patschkowski T."/>
            <person name="Rueckert C."/>
            <person name="Rupp O."/>
            <person name="Schneiker S."/>
            <person name="Schuster S.C."/>
            <person name="Vorhoelter F.J."/>
            <person name="Weber E."/>
            <person name="Puehler A."/>
            <person name="Bonas U."/>
            <person name="Bartels D."/>
            <person name="Kaiser O."/>
        </authorList>
    </citation>
    <scope>NUCLEOTIDE SEQUENCE [LARGE SCALE GENOMIC DNA]</scope>
    <source>
        <strain>85-10</strain>
    </source>
</reference>
<proteinExistence type="inferred from homology"/>
<keyword id="KW-0963">Cytoplasm</keyword>
<keyword id="KW-0342">GTP-binding</keyword>
<keyword id="KW-0547">Nucleotide-binding</keyword>
<keyword id="KW-0648">Protein biosynthesis</keyword>
<organism>
    <name type="scientific">Xanthomonas euvesicatoria pv. vesicatoria (strain 85-10)</name>
    <name type="common">Xanthomonas campestris pv. vesicatoria</name>
    <dbReference type="NCBI Taxonomy" id="316273"/>
    <lineage>
        <taxon>Bacteria</taxon>
        <taxon>Pseudomonadati</taxon>
        <taxon>Pseudomonadota</taxon>
        <taxon>Gammaproteobacteria</taxon>
        <taxon>Lysobacterales</taxon>
        <taxon>Lysobacteraceae</taxon>
        <taxon>Xanthomonas</taxon>
    </lineage>
</organism>